<accession>Q71U53</accession>
<keyword id="KW-0002">3D-structure</keyword>
<keyword id="KW-0007">Acetylation</keyword>
<keyword id="KW-0649">Protein kinase inhibitor</keyword>
<keyword id="KW-1185">Reference proteome</keyword>
<evidence type="ECO:0000250" key="1"/>
<evidence type="ECO:0000250" key="2">
    <source>
        <dbReference type="UniProtKB" id="P61925"/>
    </source>
</evidence>
<evidence type="ECO:0000256" key="3">
    <source>
        <dbReference type="SAM" id="MobiDB-lite"/>
    </source>
</evidence>
<evidence type="ECO:0000305" key="4"/>
<evidence type="ECO:0007829" key="5">
    <source>
        <dbReference type="PDB" id="2F7X"/>
    </source>
</evidence>
<reference key="1">
    <citation type="submission" date="1999-02" db="EMBL/GenBank/DDBJ databases">
        <title>PKI alpha cDNA sequence.</title>
        <authorList>
            <person name="Knoell R."/>
            <person name="Nevescanin K."/>
            <person name="Schulze K."/>
            <person name="Hummel M."/>
            <person name="Zimmermann R."/>
            <person name="Stein H."/>
            <person name="Schaper W."/>
            <person name="Schultheiss H.P."/>
        </authorList>
    </citation>
    <scope>NUCLEOTIDE SEQUENCE [MRNA]</scope>
    <source>
        <tissue>Myocardium</tissue>
    </source>
</reference>
<protein>
    <recommendedName>
        <fullName>cAMP-dependent protein kinase inhibitor alpha</fullName>
        <shortName>PKI-alpha</shortName>
    </recommendedName>
</protein>
<feature type="initiator methionine" description="Removed" evidence="2">
    <location>
        <position position="1"/>
    </location>
</feature>
<feature type="chain" id="PRO_0000154534" description="cAMP-dependent protein kinase inhibitor alpha">
    <location>
        <begin position="2"/>
        <end position="76"/>
    </location>
</feature>
<feature type="region of interest" description="Disordered" evidence="3">
    <location>
        <begin position="49"/>
        <end position="76"/>
    </location>
</feature>
<feature type="site" description="Important for inhibition" evidence="1">
    <location>
        <position position="16"/>
    </location>
</feature>
<feature type="site" description="Important for inhibition" evidence="1">
    <location>
        <position position="19"/>
    </location>
</feature>
<feature type="site" description="Important for inhibition" evidence="1">
    <location>
        <position position="20"/>
    </location>
</feature>
<feature type="modified residue" description="N-acetylthreonine" evidence="2">
    <location>
        <position position="2"/>
    </location>
</feature>
<feature type="helix" evidence="5">
    <location>
        <begin position="7"/>
        <end position="13"/>
    </location>
</feature>
<name>IPKA_PIG</name>
<dbReference type="EMBL" id="AF132737">
    <property type="protein sequence ID" value="AAF34733.1"/>
    <property type="molecule type" value="mRNA"/>
</dbReference>
<dbReference type="RefSeq" id="NP_999369.1">
    <property type="nucleotide sequence ID" value="NM_214204.1"/>
</dbReference>
<dbReference type="PDB" id="1Q24">
    <property type="method" value="X-ray"/>
    <property type="resolution" value="2.60 A"/>
    <property type="chains" value="I=6-25"/>
</dbReference>
<dbReference type="PDB" id="1Q61">
    <property type="method" value="X-ray"/>
    <property type="resolution" value="2.10 A"/>
    <property type="chains" value="I=6-25"/>
</dbReference>
<dbReference type="PDB" id="2F7X">
    <property type="method" value="X-ray"/>
    <property type="resolution" value="1.90 A"/>
    <property type="chains" value="I=6-25"/>
</dbReference>
<dbReference type="PDBsum" id="1Q24"/>
<dbReference type="PDBsum" id="1Q61"/>
<dbReference type="PDBsum" id="2F7X"/>
<dbReference type="SMR" id="Q71U53"/>
<dbReference type="FunCoup" id="Q71U53">
    <property type="interactions" value="218"/>
</dbReference>
<dbReference type="STRING" id="9823.ENSSSCP00000006574"/>
<dbReference type="PaxDb" id="9823-ENSSSCP00000006574"/>
<dbReference type="PeptideAtlas" id="Q71U53"/>
<dbReference type="GeneID" id="397408"/>
<dbReference type="KEGG" id="ssc:397408"/>
<dbReference type="CTD" id="5569"/>
<dbReference type="eggNOG" id="ENOG502S6JP">
    <property type="taxonomic scope" value="Eukaryota"/>
</dbReference>
<dbReference type="InParanoid" id="Q71U53"/>
<dbReference type="OrthoDB" id="9934738at2759"/>
<dbReference type="Proteomes" id="UP000008227">
    <property type="component" value="Unplaced"/>
</dbReference>
<dbReference type="Proteomes" id="UP000314985">
    <property type="component" value="Unplaced"/>
</dbReference>
<dbReference type="Proteomes" id="UP000694570">
    <property type="component" value="Unplaced"/>
</dbReference>
<dbReference type="Proteomes" id="UP000694571">
    <property type="component" value="Unplaced"/>
</dbReference>
<dbReference type="Proteomes" id="UP000694720">
    <property type="component" value="Unplaced"/>
</dbReference>
<dbReference type="Proteomes" id="UP000694722">
    <property type="component" value="Unplaced"/>
</dbReference>
<dbReference type="Proteomes" id="UP000694723">
    <property type="component" value="Unplaced"/>
</dbReference>
<dbReference type="Proteomes" id="UP000694724">
    <property type="component" value="Unplaced"/>
</dbReference>
<dbReference type="Proteomes" id="UP000694725">
    <property type="component" value="Unplaced"/>
</dbReference>
<dbReference type="Proteomes" id="UP000694726">
    <property type="component" value="Unplaced"/>
</dbReference>
<dbReference type="Proteomes" id="UP000694727">
    <property type="component" value="Unplaced"/>
</dbReference>
<dbReference type="Proteomes" id="UP000694728">
    <property type="component" value="Unplaced"/>
</dbReference>
<dbReference type="GO" id="GO:0005737">
    <property type="term" value="C:cytoplasm"/>
    <property type="evidence" value="ECO:0000318"/>
    <property type="project" value="GO_Central"/>
</dbReference>
<dbReference type="GO" id="GO:0005634">
    <property type="term" value="C:nucleus"/>
    <property type="evidence" value="ECO:0000318"/>
    <property type="project" value="GO_Central"/>
</dbReference>
<dbReference type="GO" id="GO:0004862">
    <property type="term" value="F:cAMP-dependent protein kinase inhibitor activity"/>
    <property type="evidence" value="ECO:0000318"/>
    <property type="project" value="GO_Central"/>
</dbReference>
<dbReference type="InterPro" id="IPR004171">
    <property type="entry name" value="cAMP_dep_PKI"/>
</dbReference>
<dbReference type="PANTHER" id="PTHR15416">
    <property type="entry name" value="CAMP-DEPENDENT PROTEIN KINASE INHIBITOR/PKI"/>
    <property type="match status" value="1"/>
</dbReference>
<dbReference type="Pfam" id="PF02827">
    <property type="entry name" value="PKI"/>
    <property type="match status" value="1"/>
</dbReference>
<dbReference type="PIRSF" id="PIRSF001667">
    <property type="entry name" value="PKI"/>
    <property type="match status" value="1"/>
</dbReference>
<proteinExistence type="evidence at protein level"/>
<gene>
    <name type="primary">PKIA</name>
</gene>
<sequence>MTDVETTYADFIASGRTGRRNAIHDILVSSASGNSNELALKLAGLDINKTEGEEDAQRSSTEQSGEAQGEAAKSES</sequence>
<organism>
    <name type="scientific">Sus scrofa</name>
    <name type="common">Pig</name>
    <dbReference type="NCBI Taxonomy" id="9823"/>
    <lineage>
        <taxon>Eukaryota</taxon>
        <taxon>Metazoa</taxon>
        <taxon>Chordata</taxon>
        <taxon>Craniata</taxon>
        <taxon>Vertebrata</taxon>
        <taxon>Euteleostomi</taxon>
        <taxon>Mammalia</taxon>
        <taxon>Eutheria</taxon>
        <taxon>Laurasiatheria</taxon>
        <taxon>Artiodactyla</taxon>
        <taxon>Suina</taxon>
        <taxon>Suidae</taxon>
        <taxon>Sus</taxon>
    </lineage>
</organism>
<comment type="function">
    <text evidence="1">Extremely potent competitive inhibitor of cAMP-dependent protein kinase activity, this protein interacts with the catalytic subunit of the enzyme after the cAMP-induced dissociation of its regulatory chains.</text>
</comment>
<comment type="miscellaneous">
    <text evidence="1">The inhibitory site contains regions very similar to the hinge regions (sites that directly interact with the enzyme active site) and 'pseudosubstrate site' of the regulatory chains; but, unlike these chains, PKI does not contain cAMP-binding sites. The arginine residues within the inhibitory site are essential for inhibition and recognition of the enzyme active site (By similarity).</text>
</comment>
<comment type="similarity">
    <text evidence="4">Belongs to the PKI family.</text>
</comment>